<accession>P08850</accession>
<sequence length="142" mass="15584">MVLSANDKTNVKNVFTKIGGHAEEYGAETLERMFTTYPPTKTYFPHFDLHHGSAQIKAHGKKVVGALIEAVNHIDDIAGALSKLSDLHAQKLRVDPVNFKLLGQCFLVVVAIHHPSVLTPEVHASLDKFLCAVGNVLTAKYR</sequence>
<name>HBA_ACCGE</name>
<protein>
    <recommendedName>
        <fullName>Hemoglobin subunit alpha-A</fullName>
    </recommendedName>
    <alternativeName>
        <fullName>Alpha-A-globin</fullName>
    </alternativeName>
    <alternativeName>
        <fullName>Hemoglobin alpha-A chain</fullName>
    </alternativeName>
</protein>
<reference key="1">
    <citation type="journal article" date="1987" name="Biol. Chem. Hoppe-Seyler">
        <title>High-altitude respiration of birds. The primary structures of the major and minor hemoglobin component of adult goshawk (Accipiter gentilis, Accipitrinae).</title>
        <authorList>
            <person name="Hiebl I."/>
            <person name="Kosters J."/>
            <person name="Braunitzer G."/>
        </authorList>
    </citation>
    <scope>PROTEIN SEQUENCE OF 2-142</scope>
</reference>
<comment type="function">
    <text>Involved in oxygen transport from the lung to the various peripheral tissues.</text>
</comment>
<comment type="subunit">
    <text>Heterotetramer of two alpha chains and two beta chains.</text>
</comment>
<comment type="tissue specificity">
    <text>Red blood cells.</text>
</comment>
<comment type="similarity">
    <text evidence="1">Belongs to the globin family.</text>
</comment>
<dbReference type="PIR" id="B26544">
    <property type="entry name" value="B26544"/>
</dbReference>
<dbReference type="SMR" id="P08850"/>
<dbReference type="GO" id="GO:0072562">
    <property type="term" value="C:blood microparticle"/>
    <property type="evidence" value="ECO:0007669"/>
    <property type="project" value="TreeGrafter"/>
</dbReference>
<dbReference type="GO" id="GO:0031838">
    <property type="term" value="C:haptoglobin-hemoglobin complex"/>
    <property type="evidence" value="ECO:0007669"/>
    <property type="project" value="TreeGrafter"/>
</dbReference>
<dbReference type="GO" id="GO:0005833">
    <property type="term" value="C:hemoglobin complex"/>
    <property type="evidence" value="ECO:0007669"/>
    <property type="project" value="InterPro"/>
</dbReference>
<dbReference type="GO" id="GO:0031720">
    <property type="term" value="F:haptoglobin binding"/>
    <property type="evidence" value="ECO:0007669"/>
    <property type="project" value="TreeGrafter"/>
</dbReference>
<dbReference type="GO" id="GO:0020037">
    <property type="term" value="F:heme binding"/>
    <property type="evidence" value="ECO:0007669"/>
    <property type="project" value="InterPro"/>
</dbReference>
<dbReference type="GO" id="GO:0005506">
    <property type="term" value="F:iron ion binding"/>
    <property type="evidence" value="ECO:0007669"/>
    <property type="project" value="InterPro"/>
</dbReference>
<dbReference type="GO" id="GO:0043177">
    <property type="term" value="F:organic acid binding"/>
    <property type="evidence" value="ECO:0007669"/>
    <property type="project" value="TreeGrafter"/>
</dbReference>
<dbReference type="GO" id="GO:0019825">
    <property type="term" value="F:oxygen binding"/>
    <property type="evidence" value="ECO:0007669"/>
    <property type="project" value="InterPro"/>
</dbReference>
<dbReference type="GO" id="GO:0005344">
    <property type="term" value="F:oxygen carrier activity"/>
    <property type="evidence" value="ECO:0007669"/>
    <property type="project" value="UniProtKB-KW"/>
</dbReference>
<dbReference type="GO" id="GO:0004601">
    <property type="term" value="F:peroxidase activity"/>
    <property type="evidence" value="ECO:0007669"/>
    <property type="project" value="TreeGrafter"/>
</dbReference>
<dbReference type="GO" id="GO:0042744">
    <property type="term" value="P:hydrogen peroxide catabolic process"/>
    <property type="evidence" value="ECO:0007669"/>
    <property type="project" value="TreeGrafter"/>
</dbReference>
<dbReference type="CDD" id="cd08927">
    <property type="entry name" value="Hb-alpha-like"/>
    <property type="match status" value="1"/>
</dbReference>
<dbReference type="FunFam" id="1.10.490.10:FF:000002">
    <property type="entry name" value="Hemoglobin subunit alpha"/>
    <property type="match status" value="1"/>
</dbReference>
<dbReference type="Gene3D" id="1.10.490.10">
    <property type="entry name" value="Globins"/>
    <property type="match status" value="1"/>
</dbReference>
<dbReference type="InterPro" id="IPR000971">
    <property type="entry name" value="Globin"/>
</dbReference>
<dbReference type="InterPro" id="IPR009050">
    <property type="entry name" value="Globin-like_sf"/>
</dbReference>
<dbReference type="InterPro" id="IPR012292">
    <property type="entry name" value="Globin/Proto"/>
</dbReference>
<dbReference type="InterPro" id="IPR002338">
    <property type="entry name" value="Hemoglobin_a-typ"/>
</dbReference>
<dbReference type="InterPro" id="IPR050056">
    <property type="entry name" value="Hemoglobin_oxygen_transport"/>
</dbReference>
<dbReference type="InterPro" id="IPR002339">
    <property type="entry name" value="Hemoglobin_pi"/>
</dbReference>
<dbReference type="PANTHER" id="PTHR11442">
    <property type="entry name" value="HEMOGLOBIN FAMILY MEMBER"/>
    <property type="match status" value="1"/>
</dbReference>
<dbReference type="PANTHER" id="PTHR11442:SF48">
    <property type="entry name" value="HEMOGLOBIN SUBUNIT ALPHA"/>
    <property type="match status" value="1"/>
</dbReference>
<dbReference type="Pfam" id="PF00042">
    <property type="entry name" value="Globin"/>
    <property type="match status" value="1"/>
</dbReference>
<dbReference type="PRINTS" id="PR00612">
    <property type="entry name" value="ALPHAHAEM"/>
</dbReference>
<dbReference type="PRINTS" id="PR00815">
    <property type="entry name" value="PIHAEM"/>
</dbReference>
<dbReference type="SUPFAM" id="SSF46458">
    <property type="entry name" value="Globin-like"/>
    <property type="match status" value="1"/>
</dbReference>
<dbReference type="PROSITE" id="PS01033">
    <property type="entry name" value="GLOBIN"/>
    <property type="match status" value="1"/>
</dbReference>
<keyword id="KW-0903">Direct protein sequencing</keyword>
<keyword id="KW-0349">Heme</keyword>
<keyword id="KW-0408">Iron</keyword>
<keyword id="KW-0479">Metal-binding</keyword>
<keyword id="KW-0561">Oxygen transport</keyword>
<keyword id="KW-0813">Transport</keyword>
<organism>
    <name type="scientific">Accipiter gentilis</name>
    <name type="common">Northern goshawk</name>
    <name type="synonym">Falco gentilis</name>
    <dbReference type="NCBI Taxonomy" id="8957"/>
    <lineage>
        <taxon>Eukaryota</taxon>
        <taxon>Metazoa</taxon>
        <taxon>Chordata</taxon>
        <taxon>Craniata</taxon>
        <taxon>Vertebrata</taxon>
        <taxon>Euteleostomi</taxon>
        <taxon>Archelosauria</taxon>
        <taxon>Archosauria</taxon>
        <taxon>Dinosauria</taxon>
        <taxon>Saurischia</taxon>
        <taxon>Theropoda</taxon>
        <taxon>Coelurosauria</taxon>
        <taxon>Aves</taxon>
        <taxon>Neognathae</taxon>
        <taxon>Neoaves</taxon>
        <taxon>Telluraves</taxon>
        <taxon>Accipitrimorphae</taxon>
        <taxon>Accipitriformes</taxon>
        <taxon>Accipitridae</taxon>
        <taxon>Accipitrinae</taxon>
        <taxon>Astur</taxon>
    </lineage>
</organism>
<feature type="initiator methionine" description="Removed" evidence="2">
    <location>
        <position position="1"/>
    </location>
</feature>
<feature type="chain" id="PRO_0000052534" description="Hemoglobin subunit alpha-A">
    <location>
        <begin position="2"/>
        <end position="142"/>
    </location>
</feature>
<feature type="domain" description="Globin" evidence="1">
    <location>
        <begin position="2"/>
        <end position="142"/>
    </location>
</feature>
<feature type="binding site" evidence="1">
    <location>
        <position position="59"/>
    </location>
    <ligand>
        <name>O2</name>
        <dbReference type="ChEBI" id="CHEBI:15379"/>
    </ligand>
</feature>
<feature type="binding site" description="proximal binding residue" evidence="1">
    <location>
        <position position="88"/>
    </location>
    <ligand>
        <name>heme b</name>
        <dbReference type="ChEBI" id="CHEBI:60344"/>
    </ligand>
    <ligandPart>
        <name>Fe</name>
        <dbReference type="ChEBI" id="CHEBI:18248"/>
    </ligandPart>
</feature>
<gene>
    <name type="primary">HBAA</name>
</gene>
<evidence type="ECO:0000255" key="1">
    <source>
        <dbReference type="PROSITE-ProRule" id="PRU00238"/>
    </source>
</evidence>
<evidence type="ECO:0000269" key="2">
    <source>
    </source>
</evidence>
<proteinExistence type="evidence at protein level"/>